<proteinExistence type="evidence at protein level"/>
<accession>Q9Z0W1</accession>
<accession>Q8CFT3</accession>
<protein>
    <recommendedName>
        <fullName>Tumor necrosis factor receptor superfamily member 16</fullName>
    </recommendedName>
    <alternativeName>
        <fullName evidence="20">Low affinity neurotrophin receptor p75NTR</fullName>
    </alternativeName>
    <alternativeName>
        <fullName>Low-affinity nerve growth factor receptor</fullName>
        <shortName>NGF receptor</shortName>
    </alternativeName>
    <alternativeName>
        <fullName>Low-affinity nerve growth factor receptor p75NGFR</fullName>
    </alternativeName>
    <alternativeName>
        <fullName>Low-affinity nerve growth factor receptor p75NGR</fullName>
    </alternativeName>
    <cdAntigenName>CD271</cdAntigenName>
</protein>
<name>TNR16_MOUSE</name>
<organism>
    <name type="scientific">Mus musculus</name>
    <name type="common">Mouse</name>
    <dbReference type="NCBI Taxonomy" id="10090"/>
    <lineage>
        <taxon>Eukaryota</taxon>
        <taxon>Metazoa</taxon>
        <taxon>Chordata</taxon>
        <taxon>Craniata</taxon>
        <taxon>Vertebrata</taxon>
        <taxon>Euteleostomi</taxon>
        <taxon>Mammalia</taxon>
        <taxon>Eutheria</taxon>
        <taxon>Euarchontoglires</taxon>
        <taxon>Glires</taxon>
        <taxon>Rodentia</taxon>
        <taxon>Myomorpha</taxon>
        <taxon>Muroidea</taxon>
        <taxon>Muridae</taxon>
        <taxon>Murinae</taxon>
        <taxon>Mus</taxon>
        <taxon>Mus</taxon>
    </lineage>
</organism>
<reference key="1">
    <citation type="journal article" date="2009" name="PLoS Biol.">
        <title>Lineage-specific biology revealed by a finished genome assembly of the mouse.</title>
        <authorList>
            <person name="Church D.M."/>
            <person name="Goodstadt L."/>
            <person name="Hillier L.W."/>
            <person name="Zody M.C."/>
            <person name="Goldstein S."/>
            <person name="She X."/>
            <person name="Bult C.J."/>
            <person name="Agarwala R."/>
            <person name="Cherry J.L."/>
            <person name="DiCuccio M."/>
            <person name="Hlavina W."/>
            <person name="Kapustin Y."/>
            <person name="Meric P."/>
            <person name="Maglott D."/>
            <person name="Birtle Z."/>
            <person name="Marques A.C."/>
            <person name="Graves T."/>
            <person name="Zhou S."/>
            <person name="Teague B."/>
            <person name="Potamousis K."/>
            <person name="Churas C."/>
            <person name="Place M."/>
            <person name="Herschleb J."/>
            <person name="Runnheim R."/>
            <person name="Forrest D."/>
            <person name="Amos-Landgraf J."/>
            <person name="Schwartz D.C."/>
            <person name="Cheng Z."/>
            <person name="Lindblad-Toh K."/>
            <person name="Eichler E.E."/>
            <person name="Ponting C.P."/>
        </authorList>
    </citation>
    <scope>NUCLEOTIDE SEQUENCE [LARGE SCALE GENOMIC DNA]</scope>
    <source>
        <strain>C57BL/6J</strain>
    </source>
</reference>
<reference key="2">
    <citation type="journal article" date="2004" name="Genome Res.">
        <title>The status, quality, and expansion of the NIH full-length cDNA project: the Mammalian Gene Collection (MGC).</title>
        <authorList>
            <consortium name="The MGC Project Team"/>
        </authorList>
    </citation>
    <scope>NUCLEOTIDE SEQUENCE [LARGE SCALE MRNA] (ISOFORM 1)</scope>
    <source>
        <tissue evidence="23">Eye</tissue>
    </source>
</reference>
<reference key="3">
    <citation type="journal article" date="1998" name="EMBO J.">
        <title>Low-affinity nerve-growth factor receptor (p75NTR) can serve as a receptor for rabies virus.</title>
        <authorList>
            <person name="Tuffereau C."/>
            <person name="Benejean J."/>
            <person name="Blondel D."/>
            <person name="Kieffer B."/>
            <person name="Flamand A."/>
        </authorList>
    </citation>
    <scope>NUCLEOTIDE SEQUENCE [MRNA] OF 4-427 (ISOFORM 1)</scope>
    <scope>FUNCTION (MICROBIAL INFECTION)</scope>
    <scope>INTERACTION WITH RABIES VIRUS GLYCOPROTEIN (MICROBIAL INFECTION)</scope>
    <source>
        <strain>A</strain>
    </source>
</reference>
<reference key="4">
    <citation type="journal article" date="1992" name="Cell">
        <title>Targeted mutation of the gene encoding the low affinity NGF receptor p75 leads to deficits in the peripheral sensory nervous system.</title>
        <authorList>
            <person name="Lee K.F."/>
            <person name="Li E."/>
            <person name="Huber L.J."/>
            <person name="Landis S.C."/>
            <person name="Sharpe A.H."/>
            <person name="Chao M.V."/>
            <person name="Jaenisch R."/>
        </authorList>
    </citation>
    <scope>DISRUPTION PHENOTYPE</scope>
    <scope>FUNCTION</scope>
    <scope>SUBCELLULAR LOCATION</scope>
</reference>
<reference key="5">
    <citation type="journal article" date="2001" name="Nat. Neurosci.">
        <title>Complete ablation of the neurotrophin receptor p75NTR causes defects both in the nervous and the vascular system.</title>
        <authorList>
            <person name="von Schack D."/>
            <person name="Casademunt E."/>
            <person name="Schweigreiter R."/>
            <person name="Meyer M."/>
            <person name="Bibel M."/>
            <person name="Dechant G."/>
        </authorList>
    </citation>
    <scope>DISRUPTION PHENOTYPE</scope>
    <scope>FUNCTION</scope>
    <scope>INTERACTION WITH NTRK2</scope>
    <scope>SUBCELLULAR LOCATION</scope>
    <scope>GLYCOSYLATION</scope>
    <scope>ALTERNATIVE SPLICING</scope>
    <scope>DEVELOPMENTAL STAGE</scope>
    <scope>TISSUE SPECIFICITY</scope>
</reference>
<reference key="6">
    <citation type="journal article" date="2002" name="J. Biol. Chem.">
        <title>Structure-function analysis of NADE: identification of regions that mediate nerve growth factor-induced apoptosis.</title>
        <authorList>
            <person name="Mukai J."/>
            <person name="Shoji S."/>
            <person name="Kimura M.T."/>
            <person name="Okubo S."/>
            <person name="Sano H."/>
            <person name="Suvanto P."/>
            <person name="Li Y."/>
            <person name="Irie S."/>
            <person name="Sato T.-A."/>
        </authorList>
    </citation>
    <scope>INTERACTION WITH BEX3</scope>
</reference>
<reference key="7">
    <citation type="journal article" date="2011" name="Sci. Signal.">
        <title>Neuronal growth cone retraction relies on proneurotrophin receptor signaling through Rac.</title>
        <authorList>
            <person name="Deinhardt K."/>
            <person name="Kim T."/>
            <person name="Spellman D.S."/>
            <person name="Mains R.E."/>
            <person name="Eipper B.A."/>
            <person name="Neubert T.A."/>
            <person name="Chao M.V."/>
            <person name="Hempstead B.L."/>
        </authorList>
    </citation>
    <scope>FUNCTION</scope>
    <scope>INTERACTION WITH SORCS2; TRIO AND NGF</scope>
    <scope>SUBCELLULAR LOCATION</scope>
    <scope>TISSUE SPECIFICITY</scope>
</reference>
<reference key="8">
    <citation type="journal article" date="2012" name="J. Biol. Chem.">
        <title>Olfactomedin 1 interacts with the Nogo A receptor complex to regulate axon growth.</title>
        <authorList>
            <person name="Nakaya N."/>
            <person name="Sultana A."/>
            <person name="Lee H.S."/>
            <person name="Tomarev S.I."/>
        </authorList>
    </citation>
    <scope>INTERACTION WITH RTN4R</scope>
</reference>
<reference key="9">
    <citation type="journal article" date="2012" name="Proc. Natl. Acad. Sci. U.S.A.">
        <title>p75 neurotrophin receptor regulates glucose homeostasis and insulin sensitivity.</title>
        <authorList>
            <person name="Baeza-Raja B."/>
            <person name="Li P."/>
            <person name="Le Moan N."/>
            <person name="Sachs B.D."/>
            <person name="Schachtrup C."/>
            <person name="Davalos D."/>
            <person name="Vagena E."/>
            <person name="Bridges D."/>
            <person name="Kim C."/>
            <person name="Saltiel A.R."/>
            <person name="Olefsky J.M."/>
            <person name="Akassoglou K."/>
        </authorList>
    </citation>
    <scope>FUNCTION</scope>
    <scope>INTERACTION WITH RAB31</scope>
</reference>
<reference key="10">
    <citation type="journal article" date="2013" name="J. Neurosci.">
        <title>p75 neurotrophin receptor is a clock gene that regulates oscillatory components of circadian and metabolic networks.</title>
        <authorList>
            <person name="Baeza-Raja B."/>
            <person name="Eckel-Mahan K."/>
            <person name="Zhang L."/>
            <person name="Vagena E."/>
            <person name="Tsigelny I.F."/>
            <person name="Sassone-Corsi P."/>
            <person name="Ptacek L.J."/>
            <person name="Akassoglou K."/>
        </authorList>
    </citation>
    <scope>FUNCTION</scope>
    <scope>INDUCTION</scope>
</reference>
<reference key="11">
    <citation type="journal article" date="2014" name="Neuron">
        <title>SorCS2 regulates dopaminergic wiring and is processed into an apoptotic two-chain receptor in peripheral glia.</title>
        <authorList>
            <person name="Glerup S."/>
            <person name="Olsen D."/>
            <person name="Vaegter C.B."/>
            <person name="Gustafsen C."/>
            <person name="Sjoegaard S.S."/>
            <person name="Hermey G."/>
            <person name="Kjolby M."/>
            <person name="Molgaard S."/>
            <person name="Ulrichsen M."/>
            <person name="Boggild S."/>
            <person name="Skeldal S."/>
            <person name="Fjorback A.N."/>
            <person name="Nyengaard J.R."/>
            <person name="Jacobsen J."/>
            <person name="Bender D."/>
            <person name="Bjarkam C.R."/>
            <person name="Soerensen E.S."/>
            <person name="Fuechtbauer E.M."/>
            <person name="Eichele G."/>
            <person name="Madsen P."/>
            <person name="Willnow T.E."/>
            <person name="Petersen C.M."/>
            <person name="Nykjaer A."/>
        </authorList>
    </citation>
    <scope>FUNCTION</scope>
    <scope>INTERACTION WITH SORCS2</scope>
</reference>
<reference key="12">
    <citation type="journal article" date="2016" name="Mol. Psychiatry">
        <title>SorCS2 is required for BDNF-dependent plasticity in the hippocampus.</title>
        <authorList>
            <person name="Glerup S."/>
            <person name="Bolcho U."/>
            <person name="Moelgaard S."/>
            <person name="Boeggild S."/>
            <person name="Vaegter C.B."/>
            <person name="Smith A.H."/>
            <person name="Nieto-Gonzalez J.L."/>
            <person name="Ovesen P.L."/>
            <person name="Pedersen L.F."/>
            <person name="Fjorback A.N."/>
            <person name="Kjolby M."/>
            <person name="Login H."/>
            <person name="Holm M.M."/>
            <person name="Andersen O.M."/>
            <person name="Nyengaard J.R."/>
            <person name="Willnow T.E."/>
            <person name="Jensen K."/>
            <person name="Nykjaer A."/>
        </authorList>
    </citation>
    <scope>FUNCTION</scope>
    <scope>INTERACTION WITH SORCS2</scope>
    <scope>TISSUE SPECIFICITY</scope>
</reference>
<reference key="13">
    <citation type="journal article" date="2018" name="Neuron">
        <title>The BDNF Val66Met Prodomain Disassembles Dendritic Spines Altering Fear Extinction Circuitry and Behavior.</title>
        <authorList>
            <person name="Giza J.I."/>
            <person name="Kim J."/>
            <person name="Meyer H.C."/>
            <person name="Anastasia A."/>
            <person name="Dincheva I."/>
            <person name="Zheng C.I."/>
            <person name="Lopez K."/>
            <person name="Bains H."/>
            <person name="Yang J."/>
            <person name="Bracken C."/>
            <person name="Liston C."/>
            <person name="Jing D."/>
            <person name="Hempstead B.L."/>
            <person name="Lee F.S."/>
        </authorList>
    </citation>
    <scope>FUNCTION</scope>
    <scope>DISRUPTION PHENOTYPE</scope>
    <scope>SUBCELLULAR LOCATION</scope>
</reference>
<gene>
    <name type="primary">Ngfr</name>
    <name type="synonym">Tnfrsf16</name>
</gene>
<dbReference type="EMBL" id="AL662875">
    <property type="status" value="NOT_ANNOTATED_CDS"/>
    <property type="molecule type" value="Genomic_DNA"/>
</dbReference>
<dbReference type="EMBL" id="BC038365">
    <property type="protein sequence ID" value="AAH38365.1"/>
    <property type="molecule type" value="mRNA"/>
</dbReference>
<dbReference type="EMBL" id="AF105292">
    <property type="protein sequence ID" value="AAD17943.1"/>
    <property type="status" value="ALT_INIT"/>
    <property type="molecule type" value="mRNA"/>
</dbReference>
<dbReference type="CCDS" id="CCDS25279.1">
    <molecule id="Q9Z0W1-1"/>
</dbReference>
<dbReference type="RefSeq" id="NP_150086.2">
    <molecule id="Q9Z0W1-1"/>
    <property type="nucleotide sequence ID" value="NM_033217.3"/>
</dbReference>
<dbReference type="BMRB" id="Q9Z0W1"/>
<dbReference type="SMR" id="Q9Z0W1"/>
<dbReference type="CORUM" id="Q9Z0W1"/>
<dbReference type="FunCoup" id="Q9Z0W1">
    <property type="interactions" value="996"/>
</dbReference>
<dbReference type="IntAct" id="Q9Z0W1">
    <property type="interactions" value="6"/>
</dbReference>
<dbReference type="MINT" id="Q9Z0W1"/>
<dbReference type="STRING" id="10090.ENSMUSP00000000122"/>
<dbReference type="BindingDB" id="Q9Z0W1"/>
<dbReference type="ChEMBL" id="CHEMBL4523515"/>
<dbReference type="GlyCosmos" id="Q9Z0W1">
    <property type="glycosylation" value="1 site, No reported glycans"/>
</dbReference>
<dbReference type="GlyGen" id="Q9Z0W1">
    <property type="glycosylation" value="1 site"/>
</dbReference>
<dbReference type="iPTMnet" id="Q9Z0W1"/>
<dbReference type="PhosphoSitePlus" id="Q9Z0W1"/>
<dbReference type="jPOST" id="Q9Z0W1"/>
<dbReference type="PaxDb" id="10090-ENSMUSP00000000122"/>
<dbReference type="PeptideAtlas" id="Q9Z0W1"/>
<dbReference type="ProteomicsDB" id="260633">
    <molecule id="Q9Z0W1-1"/>
</dbReference>
<dbReference type="ProteomicsDB" id="341380"/>
<dbReference type="Antibodypedia" id="1461">
    <property type="antibodies" value="1677 antibodies from 49 providers"/>
</dbReference>
<dbReference type="DNASU" id="18053"/>
<dbReference type="Ensembl" id="ENSMUST00000000122.7">
    <molecule id="Q9Z0W1-1"/>
    <property type="protein sequence ID" value="ENSMUSP00000000122.7"/>
    <property type="gene ID" value="ENSMUSG00000000120.7"/>
</dbReference>
<dbReference type="GeneID" id="18053"/>
<dbReference type="KEGG" id="mmu:18053"/>
<dbReference type="UCSC" id="uc007lam.2">
    <property type="organism name" value="mouse"/>
</dbReference>
<dbReference type="AGR" id="MGI:97323"/>
<dbReference type="CTD" id="4804"/>
<dbReference type="MGI" id="MGI:97323">
    <property type="gene designation" value="Ngfr"/>
</dbReference>
<dbReference type="VEuPathDB" id="HostDB:ENSMUSG00000000120"/>
<dbReference type="eggNOG" id="ENOG502QWPN">
    <property type="taxonomic scope" value="Eukaryota"/>
</dbReference>
<dbReference type="GeneTree" id="ENSGT00730000110974"/>
<dbReference type="HOGENOM" id="CLU_052667_0_1_1"/>
<dbReference type="InParanoid" id="Q9Z0W1"/>
<dbReference type="OMA" id="YSCQDKQ"/>
<dbReference type="OrthoDB" id="10048028at2759"/>
<dbReference type="TreeFam" id="TF106466"/>
<dbReference type="Reactome" id="R-MMU-193634">
    <property type="pathway name" value="Axonal growth inhibition (RHOA activation)"/>
</dbReference>
<dbReference type="Reactome" id="R-MMU-193692">
    <property type="pathway name" value="Regulated proteolysis of p75NTR"/>
</dbReference>
<dbReference type="Reactome" id="R-MMU-205017">
    <property type="pathway name" value="NFG and proNGF binds to p75NTR"/>
</dbReference>
<dbReference type="Reactome" id="R-MMU-205025">
    <property type="pathway name" value="NADE modulates death signalling"/>
</dbReference>
<dbReference type="Reactome" id="R-MMU-205043">
    <property type="pathway name" value="NRIF signals cell death from the nucleus"/>
</dbReference>
<dbReference type="Reactome" id="R-MMU-209543">
    <property type="pathway name" value="p75NTR recruits signalling complexes"/>
</dbReference>
<dbReference type="Reactome" id="R-MMU-209560">
    <property type="pathway name" value="NF-kB is activated and signals survival"/>
</dbReference>
<dbReference type="Reactome" id="R-MMU-209563">
    <property type="pathway name" value="Axonal growth stimulation"/>
</dbReference>
<dbReference type="BioGRID-ORCS" id="18053">
    <property type="hits" value="4 hits in 82 CRISPR screens"/>
</dbReference>
<dbReference type="ChiTaRS" id="Ngfr">
    <property type="organism name" value="mouse"/>
</dbReference>
<dbReference type="PRO" id="PR:Q9Z0W1"/>
<dbReference type="Proteomes" id="UP000000589">
    <property type="component" value="Chromosome 11"/>
</dbReference>
<dbReference type="RNAct" id="Q9Z0W1">
    <property type="molecule type" value="protein"/>
</dbReference>
<dbReference type="Bgee" id="ENSMUSG00000000120">
    <property type="expression patterns" value="Expressed in dorsal root ganglion and 224 other cell types or tissues"/>
</dbReference>
<dbReference type="GO" id="GO:0009986">
    <property type="term" value="C:cell surface"/>
    <property type="evidence" value="ECO:0000314"/>
    <property type="project" value="BHF-UCL"/>
</dbReference>
<dbReference type="GO" id="GO:0005911">
    <property type="term" value="C:cell-cell junction"/>
    <property type="evidence" value="ECO:0000314"/>
    <property type="project" value="MGI"/>
</dbReference>
<dbReference type="GO" id="GO:0005737">
    <property type="term" value="C:cytoplasm"/>
    <property type="evidence" value="ECO:0000314"/>
    <property type="project" value="MGI"/>
</dbReference>
<dbReference type="GO" id="GO:0043197">
    <property type="term" value="C:dendritic spine"/>
    <property type="evidence" value="ECO:0007669"/>
    <property type="project" value="UniProtKB-SubCell"/>
</dbReference>
<dbReference type="GO" id="GO:0030426">
    <property type="term" value="C:growth cone"/>
    <property type="evidence" value="ECO:0007669"/>
    <property type="project" value="UniProtKB-SubCell"/>
</dbReference>
<dbReference type="GO" id="GO:0031594">
    <property type="term" value="C:neuromuscular junction"/>
    <property type="evidence" value="ECO:0000314"/>
    <property type="project" value="SynGO"/>
</dbReference>
<dbReference type="GO" id="GO:0005654">
    <property type="term" value="C:nucleoplasm"/>
    <property type="evidence" value="ECO:0007669"/>
    <property type="project" value="Ensembl"/>
</dbReference>
<dbReference type="GO" id="GO:0043204">
    <property type="term" value="C:perikaryon"/>
    <property type="evidence" value="ECO:0007669"/>
    <property type="project" value="UniProtKB-SubCell"/>
</dbReference>
<dbReference type="GO" id="GO:0005886">
    <property type="term" value="C:plasma membrane"/>
    <property type="evidence" value="ECO:0000314"/>
    <property type="project" value="MGI"/>
</dbReference>
<dbReference type="GO" id="GO:0014069">
    <property type="term" value="C:postsynaptic density"/>
    <property type="evidence" value="ECO:0000314"/>
    <property type="project" value="MGI"/>
</dbReference>
<dbReference type="GO" id="GO:0098793">
    <property type="term" value="C:presynapse"/>
    <property type="evidence" value="ECO:0007669"/>
    <property type="project" value="GOC"/>
</dbReference>
<dbReference type="GO" id="GO:0005516">
    <property type="term" value="F:calmodulin binding"/>
    <property type="evidence" value="ECO:0000250"/>
    <property type="project" value="UniProtKB"/>
</dbReference>
<dbReference type="GO" id="GO:0015026">
    <property type="term" value="F:coreceptor activity"/>
    <property type="evidence" value="ECO:0007669"/>
    <property type="project" value="Ensembl"/>
</dbReference>
<dbReference type="GO" id="GO:0005035">
    <property type="term" value="F:death receptor activity"/>
    <property type="evidence" value="ECO:0000314"/>
    <property type="project" value="MGI"/>
</dbReference>
<dbReference type="GO" id="GO:0048406">
    <property type="term" value="F:nerve growth factor binding"/>
    <property type="evidence" value="ECO:0000314"/>
    <property type="project" value="MGI"/>
</dbReference>
<dbReference type="GO" id="GO:0031267">
    <property type="term" value="F:small GTPase binding"/>
    <property type="evidence" value="ECO:0000314"/>
    <property type="project" value="UniProtKB"/>
</dbReference>
<dbReference type="GO" id="GO:0031625">
    <property type="term" value="F:ubiquitin protein ligase binding"/>
    <property type="evidence" value="ECO:0007669"/>
    <property type="project" value="Ensembl"/>
</dbReference>
<dbReference type="GO" id="GO:0007411">
    <property type="term" value="P:axon guidance"/>
    <property type="evidence" value="ECO:0000315"/>
    <property type="project" value="MGI"/>
</dbReference>
<dbReference type="GO" id="GO:1904646">
    <property type="term" value="P:cellular response to amyloid-beta"/>
    <property type="evidence" value="ECO:0007669"/>
    <property type="project" value="Ensembl"/>
</dbReference>
<dbReference type="GO" id="GO:0007417">
    <property type="term" value="P:central nervous system development"/>
    <property type="evidence" value="ECO:0000315"/>
    <property type="project" value="MGI"/>
</dbReference>
<dbReference type="GO" id="GO:0032922">
    <property type="term" value="P:circadian regulation of gene expression"/>
    <property type="evidence" value="ECO:0000315"/>
    <property type="project" value="UniProtKB"/>
</dbReference>
<dbReference type="GO" id="GO:0007623">
    <property type="term" value="P:circadian rhythm"/>
    <property type="evidence" value="ECO:0000270"/>
    <property type="project" value="UniProtKB"/>
</dbReference>
<dbReference type="GO" id="GO:0016048">
    <property type="term" value="P:detection of temperature stimulus"/>
    <property type="evidence" value="ECO:0000315"/>
    <property type="project" value="MGI"/>
</dbReference>
<dbReference type="GO" id="GO:0035907">
    <property type="term" value="P:dorsal aorta development"/>
    <property type="evidence" value="ECO:0000315"/>
    <property type="project" value="UniProtKB"/>
</dbReference>
<dbReference type="GO" id="GO:0097191">
    <property type="term" value="P:extrinsic apoptotic signaling pathway"/>
    <property type="evidence" value="ECO:0007669"/>
    <property type="project" value="Ensembl"/>
</dbReference>
<dbReference type="GO" id="GO:0008543">
    <property type="term" value="P:fibroblast growth factor receptor signaling pathway"/>
    <property type="evidence" value="ECO:0000315"/>
    <property type="project" value="MGI"/>
</dbReference>
<dbReference type="GO" id="GO:0048144">
    <property type="term" value="P:fibroblast proliferation"/>
    <property type="evidence" value="ECO:0000315"/>
    <property type="project" value="MGI"/>
</dbReference>
<dbReference type="GO" id="GO:0042593">
    <property type="term" value="P:glucose homeostasis"/>
    <property type="evidence" value="ECO:0000315"/>
    <property type="project" value="UniProtKB"/>
</dbReference>
<dbReference type="GO" id="GO:0001942">
    <property type="term" value="P:hair follicle development"/>
    <property type="evidence" value="ECO:0000315"/>
    <property type="project" value="MGI"/>
</dbReference>
<dbReference type="GO" id="GO:0031069">
    <property type="term" value="P:hair follicle morphogenesis"/>
    <property type="evidence" value="ECO:0000315"/>
    <property type="project" value="MGI"/>
</dbReference>
<dbReference type="GO" id="GO:0001678">
    <property type="term" value="P:intracellular glucose homeostasis"/>
    <property type="evidence" value="ECO:0000315"/>
    <property type="project" value="UniProtKB"/>
</dbReference>
<dbReference type="GO" id="GO:0006886">
    <property type="term" value="P:intracellular protein transport"/>
    <property type="evidence" value="ECO:0000315"/>
    <property type="project" value="UniProtKB"/>
</dbReference>
<dbReference type="GO" id="GO:1903588">
    <property type="term" value="P:negative regulation of blood vessel endothelial cell proliferation involved in sprouting angiogenesis"/>
    <property type="evidence" value="ECO:0007669"/>
    <property type="project" value="Ensembl"/>
</dbReference>
<dbReference type="GO" id="GO:0030336">
    <property type="term" value="P:negative regulation of cell migration"/>
    <property type="evidence" value="ECO:0007669"/>
    <property type="project" value="Ensembl"/>
</dbReference>
<dbReference type="GO" id="GO:0040037">
    <property type="term" value="P:negative regulation of fibroblast growth factor receptor signaling pathway"/>
    <property type="evidence" value="ECO:0000315"/>
    <property type="project" value="MGI"/>
</dbReference>
<dbReference type="GO" id="GO:0051799">
    <property type="term" value="P:negative regulation of hair follicle development"/>
    <property type="evidence" value="ECO:0000315"/>
    <property type="project" value="MGI"/>
</dbReference>
<dbReference type="GO" id="GO:0021675">
    <property type="term" value="P:nerve development"/>
    <property type="evidence" value="ECO:0000315"/>
    <property type="project" value="MGI"/>
</dbReference>
<dbReference type="GO" id="GO:0051402">
    <property type="term" value="P:neuron apoptotic process"/>
    <property type="evidence" value="ECO:0007669"/>
    <property type="project" value="Ensembl"/>
</dbReference>
<dbReference type="GO" id="GO:0042475">
    <property type="term" value="P:odontogenesis of dentin-containing tooth"/>
    <property type="evidence" value="ECO:0000315"/>
    <property type="project" value="MGI"/>
</dbReference>
<dbReference type="GO" id="GO:2001235">
    <property type="term" value="P:positive regulation of apoptotic signaling pathway"/>
    <property type="evidence" value="ECO:0000314"/>
    <property type="project" value="MGI"/>
</dbReference>
<dbReference type="GO" id="GO:2000353">
    <property type="term" value="P:positive regulation of endothelial cell apoptotic process"/>
    <property type="evidence" value="ECO:0007669"/>
    <property type="project" value="Ensembl"/>
</dbReference>
<dbReference type="GO" id="GO:0048146">
    <property type="term" value="P:positive regulation of fibroblast proliferation"/>
    <property type="evidence" value="ECO:0000315"/>
    <property type="project" value="MGI"/>
</dbReference>
<dbReference type="GO" id="GO:1902895">
    <property type="term" value="P:positive regulation of miRNA transcription"/>
    <property type="evidence" value="ECO:0007669"/>
    <property type="project" value="Ensembl"/>
</dbReference>
<dbReference type="GO" id="GO:0042488">
    <property type="term" value="P:positive regulation of odontogenesis of dentin-containing tooth"/>
    <property type="evidence" value="ECO:0000315"/>
    <property type="project" value="MGI"/>
</dbReference>
<dbReference type="GO" id="GO:1900182">
    <property type="term" value="P:positive regulation of protein localization to nucleus"/>
    <property type="evidence" value="ECO:0007669"/>
    <property type="project" value="Ensembl"/>
</dbReference>
<dbReference type="GO" id="GO:0099171">
    <property type="term" value="P:presynaptic modulation of chemical synaptic transmission"/>
    <property type="evidence" value="ECO:0000314"/>
    <property type="project" value="SynGO"/>
</dbReference>
<dbReference type="GO" id="GO:0010468">
    <property type="term" value="P:regulation of gene expression"/>
    <property type="evidence" value="ECO:0000315"/>
    <property type="project" value="MGI"/>
</dbReference>
<dbReference type="GO" id="GO:0007266">
    <property type="term" value="P:Rho protein signal transduction"/>
    <property type="evidence" value="ECO:0007669"/>
    <property type="project" value="Ensembl"/>
</dbReference>
<dbReference type="GO" id="GO:0043588">
    <property type="term" value="P:skin development"/>
    <property type="evidence" value="ECO:0000315"/>
    <property type="project" value="MGI"/>
</dbReference>
<dbReference type="CDD" id="cd08311">
    <property type="entry name" value="Death_p75NR"/>
    <property type="match status" value="1"/>
</dbReference>
<dbReference type="CDD" id="cd13416">
    <property type="entry name" value="TNFRSF16"/>
    <property type="match status" value="1"/>
</dbReference>
<dbReference type="FunFam" id="2.10.50.10:FF:000013">
    <property type="entry name" value="Tumor necrosis factor receptor superfamily member 16"/>
    <property type="match status" value="1"/>
</dbReference>
<dbReference type="FunFam" id="1.10.533.10:FF:000034">
    <property type="entry name" value="tumor necrosis factor receptor superfamily member 16"/>
    <property type="match status" value="1"/>
</dbReference>
<dbReference type="FunFam" id="2.10.50.10:FF:000012">
    <property type="entry name" value="tumor necrosis factor receptor superfamily member 16"/>
    <property type="match status" value="1"/>
</dbReference>
<dbReference type="FunFam" id="2.10.50.10:FF:000027">
    <property type="entry name" value="tumor necrosis factor receptor superfamily member 16"/>
    <property type="match status" value="1"/>
</dbReference>
<dbReference type="Gene3D" id="6.10.250.1780">
    <property type="match status" value="1"/>
</dbReference>
<dbReference type="Gene3D" id="1.10.533.10">
    <property type="entry name" value="Death Domain, Fas"/>
    <property type="match status" value="1"/>
</dbReference>
<dbReference type="Gene3D" id="2.10.50.10">
    <property type="entry name" value="Tumor Necrosis Factor Receptor, subunit A, domain 2"/>
    <property type="match status" value="4"/>
</dbReference>
<dbReference type="InterPro" id="IPR011029">
    <property type="entry name" value="DEATH-like_dom_sf"/>
</dbReference>
<dbReference type="InterPro" id="IPR000488">
    <property type="entry name" value="Death_dom"/>
</dbReference>
<dbReference type="InterPro" id="IPR052302">
    <property type="entry name" value="Neurotrophin_rcpt-DD"/>
</dbReference>
<dbReference type="InterPro" id="IPR001368">
    <property type="entry name" value="TNFR/NGFR_Cys_rich_reg"/>
</dbReference>
<dbReference type="InterPro" id="IPR041448">
    <property type="entry name" value="TNFR16_TM"/>
</dbReference>
<dbReference type="InterPro" id="IPR022325">
    <property type="entry name" value="TNFR_16"/>
</dbReference>
<dbReference type="InterPro" id="IPR034046">
    <property type="entry name" value="TNFRSF16_N"/>
</dbReference>
<dbReference type="PANTHER" id="PTHR46605">
    <property type="entry name" value="TUMOR NECROSIS FACTOR RECEPTOR"/>
    <property type="match status" value="1"/>
</dbReference>
<dbReference type="PANTHER" id="PTHR46605:SF3">
    <property type="entry name" value="TUMOR NECROSIS FACTOR RECEPTOR SUPERFAMILY MEMBER 16"/>
    <property type="match status" value="1"/>
</dbReference>
<dbReference type="Pfam" id="PF00531">
    <property type="entry name" value="Death"/>
    <property type="match status" value="1"/>
</dbReference>
<dbReference type="Pfam" id="PF18422">
    <property type="entry name" value="TNFR_16_TM"/>
    <property type="match status" value="1"/>
</dbReference>
<dbReference type="Pfam" id="PF00020">
    <property type="entry name" value="TNFR_c6"/>
    <property type="match status" value="3"/>
</dbReference>
<dbReference type="PRINTS" id="PR01966">
    <property type="entry name" value="TNFACTORR16"/>
</dbReference>
<dbReference type="SMART" id="SM00005">
    <property type="entry name" value="DEATH"/>
    <property type="match status" value="1"/>
</dbReference>
<dbReference type="SMART" id="SM00208">
    <property type="entry name" value="TNFR"/>
    <property type="match status" value="4"/>
</dbReference>
<dbReference type="SUPFAM" id="SSF47986">
    <property type="entry name" value="DEATH domain"/>
    <property type="match status" value="1"/>
</dbReference>
<dbReference type="SUPFAM" id="SSF57586">
    <property type="entry name" value="TNF receptor-like"/>
    <property type="match status" value="4"/>
</dbReference>
<dbReference type="PROSITE" id="PS50017">
    <property type="entry name" value="DEATH_DOMAIN"/>
    <property type="match status" value="1"/>
</dbReference>
<dbReference type="PROSITE" id="PS00652">
    <property type="entry name" value="TNFR_NGFR_1"/>
    <property type="match status" value="3"/>
</dbReference>
<dbReference type="PROSITE" id="PS50050">
    <property type="entry name" value="TNFR_NGFR_2"/>
    <property type="match status" value="4"/>
</dbReference>
<comment type="function">
    <text evidence="1 3 8 10 11 12 14 15 16">Low affinity neurotrophin receptor which can bind to mature NGF, BDNF, NTF3, and NTF4 (PubMed:11559852, PubMed:1317267). Forms a heterodimeric receptor with SORCS2 that binds the precursor forms of NGF (proNGF), BDNF (proBDNF) and NTF3 (proNT3) with high affinity, and has much lower affinity for mature NGF and BDNF (PubMed:22155786, PubMed:24908487, PubMed:27457814). Plays an important role in differentiation and survival of specific neuronal populations during development (PubMed:11559852, PubMed:1317267). Can mediate cell survival as well as cell death of neural cells (PubMed:11559852, PubMed:1317267, PubMed:24908487). The heterodimeric receptor formed with SORCS2 plays a role in proBDNF-dependent synaptic plasticity, in hippocampal long term depression (LTD) and long term potentiation (LTP) (PubMed:27457814). Plays a role in the inactivation of RHOA (By similarity). Plays a role in the regulation of the translocation of GLUT4 to the cell surface in adipocytes and skeletal muscle cells in response to insulin, probably by regulating RAB31 activity, and thereby contributes to the regulation of insulin-dependent glucose uptake (PubMed:22460790). Necessary for the circadian oscillation of the clock genes BMAL1, PER1, PER2 and NR1D1 in the suprachiasmatic nucleus (SCN) of the brain and in liver and of the genes involved in glucose and lipid metabolism in the liver (PubMed:23785138).</text>
</comment>
<comment type="function">
    <text evidence="18">(Microbial infection) Cell surface receptor for rabies virus glycoprotein Gs.</text>
</comment>
<comment type="function">
    <molecule>Isoform 2</molecule>
    <text evidence="8">Does not bind NGF, BDNF, NTF3, and NTF4.</text>
</comment>
<comment type="subunit">
    <text evidence="2 3 8 9 11 12 13 15 16">Homodimer; disulfide-linked. Heterodimer with SORCS2 (PubMed:22155786, PubMed:24908487, PubMed:27457814). The extracellular domains of the heterodimer bind NGF. The cytoplasmic region of the heterodimer binds TRIO. NGF binding mediates dissociation of TRIO from the receptor complex (PubMed:22155786). Interacts with TRAF2, TRAF4, TRAF6, PTPN13 and RANBP9. Interacts through TRAF6 with SQSTM1 which bridges NGFR to NTRK1. Interacts with BEX1 (By similarity). Interacts with BEX3 (PubMed:11830582). Interacts with KIDINS220 and NTRK1. Can form a ternary complex with NTRK1 and KIDINS220 and this complex is affected by the expression levels of KIDINS220. An increase in KIDINS220 expression leads to a decreased association of NGFR and NTRK1. Interacts (via death domain) with RAB31 (PubMed:22460790). Interacts with NTRK2; may regulate the ligand specificity of the NTRK2 receptor (PubMed:11559852). Interacts with LINGO1. Interacts with NRADD. Interacts with MAGED1; the interaction antagonizes the association NGFR:NTRK1 (By similarity). Interacts with RTN4R (PubMed:22923615). Interacts (via death domain) with ARHGDIA and RIPK2 (By similarity). Interacts with BFAR (By similarity).</text>
</comment>
<comment type="subunit">
    <text evidence="18">(Microbial infection) Binds to rabies virus glycoprotein Gs.</text>
</comment>
<comment type="interaction">
    <interactant intactId="EBI-4411273">
        <id>Q9Z0W1</id>
    </interactant>
    <interactant intactId="EBI-9915438">
        <id>Q9EPR5</id>
        <label>Sorcs2</label>
    </interactant>
    <organismsDiffer>false</organismsDiffer>
    <experiments>4</experiments>
</comment>
<comment type="subcellular location">
    <subcellularLocation>
        <location evidence="8 10 11 18">Cell membrane</location>
        <topology evidence="21">Single-pass type I membrane protein</topology>
    </subcellularLocation>
    <subcellularLocation>
        <location evidence="3">Cytoplasm</location>
    </subcellularLocation>
    <subcellularLocation>
        <location evidence="11">Perikaryon</location>
    </subcellularLocation>
    <subcellularLocation>
        <location evidence="11">Cell projection</location>
        <location evidence="11">Growth cone</location>
    </subcellularLocation>
    <subcellularLocation>
        <location evidence="17">Cell projection</location>
        <location evidence="17">Dendritic spine</location>
    </subcellularLocation>
</comment>
<comment type="alternative products">
    <event type="alternative splicing"/>
    <isoform>
        <id>Q9Z0W1-1</id>
        <name>1</name>
        <sequence type="displayed"/>
    </isoform>
    <isoform>
        <id>Q9Z0W1-2</id>
        <name>2</name>
        <name evidence="19">s-p75</name>
        <sequence type="not described"/>
    </isoform>
</comment>
<comment type="tissue specificity">
    <text evidence="8 11 16">Detected in Schwann cells (PubMed:11559852). Detected in embryonic brain, in hippocampus neurons (at protein level) (PubMed:22155786, PubMed:27457814). Detected in brain and spinal cord (PubMed:11559852).</text>
</comment>
<comment type="developmental stage">
    <text evidence="8">Detected in embryonic large blood vessels at 11.5 dpc.</text>
</comment>
<comment type="induction">
    <text evidence="14">Expression oscillates in a circadian manner in the suprachiasmatic nucleus (SCN) of the brain and in liver. Expression seen at higher levels during the light period and lower during the dark period.</text>
</comment>
<comment type="domain">
    <text evidence="2 3">The death domain mediates interaction with RANBP9 (By similarity). It also mediates interaction with ARHGDIA and RIPK2 (By similarity).</text>
</comment>
<comment type="domain">
    <text evidence="1">The extracellular domain is responsible for interaction with NTRK1.</text>
</comment>
<comment type="PTM">
    <text evidence="1 8">N-glycosylated (PubMed:11559852). O-glycosylated.</text>
</comment>
<comment type="PTM">
    <text evidence="1">Phosphorylated on serine residues.</text>
</comment>
<comment type="disruption phenotype">
    <text evidence="8">Embryos are present at the expected Mendelian rate at 15.5 dpc, but mutant mice display about 40% perinatal lethality. At 11.5 dpc, mutant embryos display mildly to severely dilated blood vessels with thinner walls. The dorsal aorta is particularly affected. Many embryos show massive dilatations, ruptures and blood leakage. Surviving animals display small size and hind limb ataxia at 13 days after birth. When held by their tails, they respond by stretching their hind legs pointing upwards. The diameter of their sciatic nerve is strongly reduced. At 3 days after birth, the number of Schwann cells is strongly reduced in sciatic nerve from mutant mice. Likewise, the number of sensory neurons in dorsal root ganglia is strongly reduced (PubMed:11559852). The initially reported gene disruption experiment finds that mice are born at the expected Mendelian rate, are fertile, and have no visible phenotype when young. However, after 4 months mutant mice develop skin alterations with severe ulcers on all extremities. Already before the onset of symptoms, mutant mice display decreased skin innervation and smaller dorsal root ganglia, plus impaired heat sensitivity (PubMed:11559852).</text>
</comment>
<comment type="miscellaneous">
    <molecule>Isoform 2</molecule>
    <text evidence="22">Minor isoform that lacks exon 3.</text>
</comment>
<comment type="caution">
    <text evidence="8 10">The initial gene disruption experiment found a less pronounced phenotype than that reported in a later study (PubMed:11559852, PubMed:1317267). Both experiments disrupt expression of isoform 1 and NGF binding (PubMed:11559852, PubMed:1317267). The differences may be due to the presence of isoform 2; its expression is disrupted in the later experiment, but not in the initial experiment (PubMed:11559852).</text>
</comment>
<comment type="sequence caution" evidence="21">
    <conflict type="erroneous initiation">
        <sequence resource="EMBL-CDS" id="AAD17943"/>
    </conflict>
    <text>Truncated N-terminus.</text>
</comment>
<feature type="signal peptide" evidence="4">
    <location>
        <begin position="1"/>
        <end position="31"/>
    </location>
</feature>
<feature type="chain" id="PRO_0000034592" description="Tumor necrosis factor receptor superfamily member 16">
    <location>
        <begin position="32"/>
        <end position="427"/>
    </location>
</feature>
<feature type="topological domain" description="Extracellular" evidence="21">
    <location>
        <begin position="32"/>
        <end position="254"/>
    </location>
</feature>
<feature type="transmembrane region" description="Helical" evidence="4">
    <location>
        <begin position="255"/>
        <end position="275"/>
    </location>
</feature>
<feature type="topological domain" description="Cytoplasmic" evidence="21">
    <location>
        <begin position="276"/>
        <end position="427"/>
    </location>
</feature>
<feature type="repeat" description="TNFR-Cys 1" evidence="6">
    <location>
        <begin position="34"/>
        <end position="67"/>
    </location>
</feature>
<feature type="repeat" description="TNFR-Cys 2" evidence="6">
    <location>
        <begin position="69"/>
        <end position="110"/>
    </location>
</feature>
<feature type="repeat" description="TNFR-Cys 3" evidence="6">
    <location>
        <begin position="111"/>
        <end position="149"/>
    </location>
</feature>
<feature type="repeat" description="TNFR-Cys 4" evidence="6">
    <location>
        <begin position="151"/>
        <end position="191"/>
    </location>
</feature>
<feature type="domain" description="Death" evidence="5">
    <location>
        <begin position="356"/>
        <end position="421"/>
    </location>
</feature>
<feature type="region of interest" description="Disordered" evidence="7">
    <location>
        <begin position="197"/>
        <end position="223"/>
    </location>
</feature>
<feature type="region of interest" description="Disordered" evidence="7">
    <location>
        <begin position="284"/>
        <end position="334"/>
    </location>
</feature>
<feature type="region of interest" description="Mediates interaction with KIDINS220" evidence="1">
    <location>
        <begin position="329"/>
        <end position="344"/>
    </location>
</feature>
<feature type="compositionally biased region" description="Polar residues" evidence="7">
    <location>
        <begin position="200"/>
        <end position="217"/>
    </location>
</feature>
<feature type="compositionally biased region" description="Polar residues" evidence="7">
    <location>
        <begin position="284"/>
        <end position="294"/>
    </location>
</feature>
<feature type="compositionally biased region" description="Polar residues" evidence="7">
    <location>
        <begin position="308"/>
        <end position="329"/>
    </location>
</feature>
<feature type="modified residue" description="Phosphoserine" evidence="3">
    <location>
        <position position="314"/>
    </location>
</feature>
<feature type="glycosylation site" description="N-linked (GlcNAc...) asparagine" evidence="4">
    <location>
        <position position="63"/>
    </location>
</feature>
<feature type="disulfide bond" evidence="6">
    <location>
        <begin position="35"/>
        <end position="46"/>
    </location>
</feature>
<feature type="disulfide bond" evidence="6">
    <location>
        <begin position="47"/>
        <end position="60"/>
    </location>
</feature>
<feature type="disulfide bond" evidence="6">
    <location>
        <begin position="50"/>
        <end position="67"/>
    </location>
</feature>
<feature type="disulfide bond" evidence="6">
    <location>
        <begin position="70"/>
        <end position="86"/>
    </location>
</feature>
<feature type="disulfide bond" evidence="6">
    <location>
        <begin position="89"/>
        <end position="102"/>
    </location>
</feature>
<feature type="disulfide bond" evidence="6">
    <location>
        <begin position="92"/>
        <end position="110"/>
    </location>
</feature>
<feature type="disulfide bond" evidence="6">
    <location>
        <begin position="112"/>
        <end position="125"/>
    </location>
</feature>
<feature type="disulfide bond" evidence="6">
    <location>
        <begin position="128"/>
        <end position="141"/>
    </location>
</feature>
<feature type="disulfide bond" evidence="6">
    <location>
        <begin position="131"/>
        <end position="149"/>
    </location>
</feature>
<feature type="disulfide bond" evidence="6">
    <location>
        <begin position="152"/>
        <end position="167"/>
    </location>
</feature>
<feature type="disulfide bond" evidence="6">
    <location>
        <begin position="170"/>
        <end position="183"/>
    </location>
</feature>
<feature type="disulfide bond" evidence="6">
    <location>
        <begin position="173"/>
        <end position="191"/>
    </location>
</feature>
<feature type="sequence conflict" description="In Ref. 3; AAD17943." ref="3">
    <original>G</original>
    <variation>A</variation>
    <location>
        <position position="329"/>
    </location>
</feature>
<evidence type="ECO:0000250" key="1"/>
<evidence type="ECO:0000250" key="2">
    <source>
        <dbReference type="UniProtKB" id="P07174"/>
    </source>
</evidence>
<evidence type="ECO:0000250" key="3">
    <source>
        <dbReference type="UniProtKB" id="P08138"/>
    </source>
</evidence>
<evidence type="ECO:0000255" key="4"/>
<evidence type="ECO:0000255" key="5">
    <source>
        <dbReference type="PROSITE-ProRule" id="PRU00064"/>
    </source>
</evidence>
<evidence type="ECO:0000255" key="6">
    <source>
        <dbReference type="PROSITE-ProRule" id="PRU00206"/>
    </source>
</evidence>
<evidence type="ECO:0000256" key="7">
    <source>
        <dbReference type="SAM" id="MobiDB-lite"/>
    </source>
</evidence>
<evidence type="ECO:0000269" key="8">
    <source>
    </source>
</evidence>
<evidence type="ECO:0000269" key="9">
    <source>
    </source>
</evidence>
<evidence type="ECO:0000269" key="10">
    <source>
    </source>
</evidence>
<evidence type="ECO:0000269" key="11">
    <source>
    </source>
</evidence>
<evidence type="ECO:0000269" key="12">
    <source>
    </source>
</evidence>
<evidence type="ECO:0000269" key="13">
    <source>
    </source>
</evidence>
<evidence type="ECO:0000269" key="14">
    <source>
    </source>
</evidence>
<evidence type="ECO:0000269" key="15">
    <source>
    </source>
</evidence>
<evidence type="ECO:0000269" key="16">
    <source>
    </source>
</evidence>
<evidence type="ECO:0000269" key="17">
    <source>
    </source>
</evidence>
<evidence type="ECO:0000269" key="18">
    <source>
    </source>
</evidence>
<evidence type="ECO:0000303" key="19">
    <source>
    </source>
</evidence>
<evidence type="ECO:0000303" key="20">
    <source>
    </source>
</evidence>
<evidence type="ECO:0000305" key="21"/>
<evidence type="ECO:0000305" key="22">
    <source>
    </source>
</evidence>
<evidence type="ECO:0000312" key="23">
    <source>
        <dbReference type="EMBL" id="AAH38365.1"/>
    </source>
</evidence>
<sequence length="427" mass="45647">MRRAGAACSAMDRLRLLLLLLLLLGVSFGGAKETCSTGMYTHSGECCKACNLGEGVAQPCGANQTVCEPCLDSVTFSDVVSATEPCKPCTECLGLQSMSAPCVEADDAVCRCSYGYYQDEETGRCEACSVCGVGSGLVFSCQDKQNTVCEECPEGTYSDEANHVDPCLPCTVCEDTERQLRECTPWADAECEEIPGRWITRSTPPEGSDVTTPSTQEPEAPPERDLIASTVADTVTTVMGSSQPVVTRGTADNLIPVYCSILAAVVVGLVAYIAFKRWNSCKQNKQGANSRPVNQTPPPEGEKLHSDSGISVDSQSLHDQQTHTQTASGQALKGDGNLYSSLPLTKREEVEKLLNGDTWRHLAGELGYQPEHIDSFTHEACPVRALLASWGAQDSATLDALLAALRRIQRADIVESLCSESTATSPV</sequence>
<keyword id="KW-0025">Alternative splicing</keyword>
<keyword id="KW-0053">Apoptosis</keyword>
<keyword id="KW-0090">Biological rhythms</keyword>
<keyword id="KW-1003">Cell membrane</keyword>
<keyword id="KW-0966">Cell projection</keyword>
<keyword id="KW-0963">Cytoplasm</keyword>
<keyword id="KW-0217">Developmental protein</keyword>
<keyword id="KW-0221">Differentiation</keyword>
<keyword id="KW-1015">Disulfide bond</keyword>
<keyword id="KW-0325">Glycoprotein</keyword>
<keyword id="KW-0472">Membrane</keyword>
<keyword id="KW-0524">Neurogenesis</keyword>
<keyword id="KW-0597">Phosphoprotein</keyword>
<keyword id="KW-0675">Receptor</keyword>
<keyword id="KW-1185">Reference proteome</keyword>
<keyword id="KW-0677">Repeat</keyword>
<keyword id="KW-0732">Signal</keyword>
<keyword id="KW-0770">Synapse</keyword>
<keyword id="KW-0812">Transmembrane</keyword>
<keyword id="KW-1133">Transmembrane helix</keyword>